<proteinExistence type="evidence at protein level"/>
<organism>
    <name type="scientific">Vaccinia virus (strain Western Reserve)</name>
    <name type="common">VACV</name>
    <name type="synonym">Vaccinia virus (strain WR)</name>
    <dbReference type="NCBI Taxonomy" id="10254"/>
    <lineage>
        <taxon>Viruses</taxon>
        <taxon>Varidnaviria</taxon>
        <taxon>Bamfordvirae</taxon>
        <taxon>Nucleocytoviricota</taxon>
        <taxon>Pokkesviricetes</taxon>
        <taxon>Chitovirales</taxon>
        <taxon>Poxviridae</taxon>
        <taxon>Chordopoxvirinae</taxon>
        <taxon>Orthopoxvirus</taxon>
        <taxon>Vaccinia virus</taxon>
    </lineage>
</organism>
<comment type="function">
    <text evidence="2">Component of the virion core that undergoes proteolytic processing during the immature virion (IV) to mature virion (MV) transition. Essential for the formation of a structurally normal core.</text>
</comment>
<comment type="subcellular location">
    <molecule>25 kDa core protein OPG138</molecule>
    <subcellularLocation>
        <location>Virion</location>
    </subcellularLocation>
    <text evidence="4">Localizes to the virion core.</text>
</comment>
<comment type="subcellular location">
    <molecule>17 kDa core protein OPG138</molecule>
    <subcellularLocation>
        <location>Virion</location>
    </subcellularLocation>
    <text evidence="4">Localizes to the virion core.</text>
</comment>
<comment type="induction">
    <text evidence="3">Expressed in the late phase of the viral replicative cycle.</text>
</comment>
<comment type="PTM">
    <text evidence="3">The 25-kDa precursor is cleaved to a mature protein of 17 kDa during virion maturation. Further proteolytic processing is supposed to occur since five more OPG138-derived products have been observed.</text>
</comment>
<comment type="similarity">
    <text evidence="4">Belongs to the orthopoxvirus OPG138 family.</text>
</comment>
<protein>
    <recommendedName>
        <fullName>25 kDa core protein OPG138</fullName>
    </recommendedName>
    <component>
        <recommendedName>
            <fullName>17 kDa core protein OPG138</fullName>
            <shortName>17K</shortName>
        </recommendedName>
    </component>
</protein>
<organismHost>
    <name type="scientific">Bos taurus</name>
    <name type="common">Bovine</name>
    <dbReference type="NCBI Taxonomy" id="9913"/>
</organismHost>
<evidence type="ECO:0000256" key="1">
    <source>
        <dbReference type="SAM" id="MobiDB-lite"/>
    </source>
</evidence>
<evidence type="ECO:0000269" key="2">
    <source>
    </source>
</evidence>
<evidence type="ECO:0000269" key="3">
    <source>
    </source>
</evidence>
<evidence type="ECO:0000305" key="4"/>
<reference key="1">
    <citation type="submission" date="2003-02" db="EMBL/GenBank/DDBJ databases">
        <title>Sequencing of the coding region of Vaccinia-WR to an average 9-fold redundancy and an error rate of 0.16/10kb.</title>
        <authorList>
            <person name="Esposito J.J."/>
            <person name="Frace A.M."/>
            <person name="Sammons S.A."/>
            <person name="Olsen-Rasmussen M."/>
            <person name="Osborne J."/>
            <person name="Wohlhueter R."/>
        </authorList>
    </citation>
    <scope>NUCLEOTIDE SEQUENCE [LARGE SCALE GENOMIC DNA]</scope>
</reference>
<reference key="2">
    <citation type="journal article" date="2007" name="Virol. J.">
        <title>Vaccinia virus A12L protein and its AG/A proteolysis play an important role in viral morphogenic transition.</title>
        <authorList>
            <person name="Yang S.J."/>
            <person name="Hruby D.E."/>
        </authorList>
    </citation>
    <scope>FUNCTION</scope>
    <scope>MUTAGENESIS OF 55-ALA--ALA-57</scope>
</reference>
<reference key="3">
    <citation type="journal article" date="2007" name="Virol. J.">
        <title>Characterization of vaccinia virus A12L protein proteolysis and its participation in virus assembly.</title>
        <authorList>
            <person name="Yang S.J."/>
        </authorList>
    </citation>
    <scope>PROTEOLYTIC PROCESSING</scope>
    <scope>INDUCTION</scope>
    <scope>MUTAGENESIS OF 55-ALA--ALA-57</scope>
</reference>
<feature type="chain" id="PRO_0000099237" description="25 kDa core protein OPG138">
    <location>
        <begin position="1"/>
        <end position="192"/>
    </location>
</feature>
<feature type="chain" id="PRO_0000413915" description="17 kDa core protein OPG138">
    <location>
        <begin position="1"/>
        <end position="56"/>
    </location>
</feature>
<feature type="region of interest" description="Disordered" evidence="1">
    <location>
        <begin position="69"/>
        <end position="104"/>
    </location>
</feature>
<feature type="region of interest" description="Disordered" evidence="1">
    <location>
        <begin position="152"/>
        <end position="178"/>
    </location>
</feature>
<feature type="compositionally biased region" description="Low complexity" evidence="1">
    <location>
        <begin position="69"/>
        <end position="91"/>
    </location>
</feature>
<feature type="compositionally biased region" description="Basic residues" evidence="1">
    <location>
        <begin position="154"/>
        <end position="164"/>
    </location>
</feature>
<feature type="site" description="Cleavage; by OPG083 protease" evidence="3">
    <location>
        <begin position="56"/>
        <end position="57"/>
    </location>
</feature>
<feature type="mutagenesis site" description="Aberrant virus particles." evidence="2 3">
    <original>AGA</original>
    <variation>IDI</variation>
    <location>
        <begin position="55"/>
        <end position="57"/>
    </location>
</feature>
<gene>
    <name type="primary">OPG138</name>
    <name type="ordered locus">VACWR131</name>
    <name type="ORF">A12L</name>
</gene>
<sequence>MADKKNLAVRSSYDDYIETVNKITPQLKNLLAQIGGDAAVKGGNNNLNSQTDVTAGACDTKSKSSKCITCKPKSKSSSSSTSASKGSKNTSGAPRRRTTVTTTSYNAMDGQIVQAVTNAGKIVYGTVRDGQLEVRGMVGEINHDLLGIDSVNAGKKKPSKKMPTNKKINMSSGMRRQEQINPDDCCLDMGMY</sequence>
<keyword id="KW-0426">Late protein</keyword>
<keyword id="KW-1185">Reference proteome</keyword>
<keyword id="KW-0946">Virion</keyword>
<name>PG138_VACCW</name>
<accession>Q80HV7</accession>
<dbReference type="EMBL" id="AY243312">
    <property type="protein sequence ID" value="AAO89410.1"/>
    <property type="molecule type" value="Genomic_DNA"/>
</dbReference>
<dbReference type="RefSeq" id="YP_233013.1">
    <property type="nucleotide sequence ID" value="NC_006998.1"/>
</dbReference>
<dbReference type="SMR" id="Q80HV7"/>
<dbReference type="DNASU" id="3707529"/>
<dbReference type="GeneID" id="3707529"/>
<dbReference type="KEGG" id="vg:3707529"/>
<dbReference type="Proteomes" id="UP000000344">
    <property type="component" value="Genome"/>
</dbReference>
<dbReference type="GO" id="GO:0044423">
    <property type="term" value="C:virion component"/>
    <property type="evidence" value="ECO:0007669"/>
    <property type="project" value="UniProtKB-KW"/>
</dbReference>
<dbReference type="InterPro" id="IPR006744">
    <property type="entry name" value="Poxvirus_A12"/>
</dbReference>
<dbReference type="Pfam" id="PF04651">
    <property type="entry name" value="Pox_A12"/>
    <property type="match status" value="1"/>
</dbReference>